<name>RS15_WOLWR</name>
<sequence length="90" mass="10573">MSITSEKKKSLINIYAIKEDDTGSSFVQCAILTERISNLTEHFKVHKHDHHSKRGLLILIGRRRKHLNYIKRKFGNEAYQELIEKLGIRK</sequence>
<organism>
    <name type="scientific">Wolbachia sp. subsp. Drosophila simulans (strain wRi)</name>
    <dbReference type="NCBI Taxonomy" id="66084"/>
    <lineage>
        <taxon>Bacteria</taxon>
        <taxon>Pseudomonadati</taxon>
        <taxon>Pseudomonadota</taxon>
        <taxon>Alphaproteobacteria</taxon>
        <taxon>Rickettsiales</taxon>
        <taxon>Anaplasmataceae</taxon>
        <taxon>Wolbachieae</taxon>
        <taxon>Wolbachia</taxon>
    </lineage>
</organism>
<reference key="1">
    <citation type="journal article" date="2009" name="Proc. Natl. Acad. Sci. U.S.A.">
        <title>The mosaic genome structure of the Wolbachia wRi strain infecting Drosophila simulans.</title>
        <authorList>
            <person name="Klasson L."/>
            <person name="Westberg J."/>
            <person name="Sapountzis P."/>
            <person name="Naeslund K."/>
            <person name="Lutnaes Y."/>
            <person name="Darby A.C."/>
            <person name="Veneti Z."/>
            <person name="Chen L."/>
            <person name="Braig H.R."/>
            <person name="Garrett R."/>
            <person name="Bourtzis K."/>
            <person name="Andersson S.G."/>
        </authorList>
    </citation>
    <scope>NUCLEOTIDE SEQUENCE [LARGE SCALE GENOMIC DNA]</scope>
    <source>
        <strain>wRi</strain>
    </source>
</reference>
<comment type="function">
    <text evidence="1">One of the primary rRNA binding proteins, it binds directly to 16S rRNA where it helps nucleate assembly of the platform of the 30S subunit by binding and bridging several RNA helices of the 16S rRNA.</text>
</comment>
<comment type="function">
    <text evidence="1">Forms an intersubunit bridge (bridge B4) with the 23S rRNA of the 50S subunit in the ribosome.</text>
</comment>
<comment type="subunit">
    <text evidence="1">Part of the 30S ribosomal subunit. Forms a bridge to the 50S subunit in the 70S ribosome, contacting the 23S rRNA.</text>
</comment>
<comment type="similarity">
    <text evidence="1">Belongs to the universal ribosomal protein uS15 family.</text>
</comment>
<feature type="chain" id="PRO_1000166449" description="Small ribosomal subunit protein uS15">
    <location>
        <begin position="1"/>
        <end position="90"/>
    </location>
</feature>
<proteinExistence type="inferred from homology"/>
<dbReference type="EMBL" id="CP001391">
    <property type="protein sequence ID" value="ACN95577.1"/>
    <property type="molecule type" value="Genomic_DNA"/>
</dbReference>
<dbReference type="RefSeq" id="WP_006279944.1">
    <property type="nucleotide sequence ID" value="NZ_MKIF01000052.1"/>
</dbReference>
<dbReference type="SMR" id="C0R3T5"/>
<dbReference type="STRING" id="66084.WRi_008400"/>
<dbReference type="KEGG" id="wri:WRi_008400"/>
<dbReference type="HOGENOM" id="CLU_148518_0_0_5"/>
<dbReference type="Proteomes" id="UP000001293">
    <property type="component" value="Chromosome"/>
</dbReference>
<dbReference type="GO" id="GO:0022627">
    <property type="term" value="C:cytosolic small ribosomal subunit"/>
    <property type="evidence" value="ECO:0007669"/>
    <property type="project" value="TreeGrafter"/>
</dbReference>
<dbReference type="GO" id="GO:0019843">
    <property type="term" value="F:rRNA binding"/>
    <property type="evidence" value="ECO:0007669"/>
    <property type="project" value="UniProtKB-UniRule"/>
</dbReference>
<dbReference type="GO" id="GO:0003735">
    <property type="term" value="F:structural constituent of ribosome"/>
    <property type="evidence" value="ECO:0007669"/>
    <property type="project" value="InterPro"/>
</dbReference>
<dbReference type="GO" id="GO:0006412">
    <property type="term" value="P:translation"/>
    <property type="evidence" value="ECO:0007669"/>
    <property type="project" value="UniProtKB-UniRule"/>
</dbReference>
<dbReference type="CDD" id="cd00353">
    <property type="entry name" value="Ribosomal_S15p_S13e"/>
    <property type="match status" value="1"/>
</dbReference>
<dbReference type="FunFam" id="1.10.287.10:FF:000002">
    <property type="entry name" value="30S ribosomal protein S15"/>
    <property type="match status" value="1"/>
</dbReference>
<dbReference type="Gene3D" id="6.10.250.3130">
    <property type="match status" value="1"/>
</dbReference>
<dbReference type="Gene3D" id="1.10.287.10">
    <property type="entry name" value="S15/NS1, RNA-binding"/>
    <property type="match status" value="1"/>
</dbReference>
<dbReference type="HAMAP" id="MF_01343_B">
    <property type="entry name" value="Ribosomal_uS15_B"/>
    <property type="match status" value="1"/>
</dbReference>
<dbReference type="InterPro" id="IPR000589">
    <property type="entry name" value="Ribosomal_uS15"/>
</dbReference>
<dbReference type="InterPro" id="IPR005290">
    <property type="entry name" value="Ribosomal_uS15_bac-type"/>
</dbReference>
<dbReference type="InterPro" id="IPR009068">
    <property type="entry name" value="uS15_NS1_RNA-bd_sf"/>
</dbReference>
<dbReference type="NCBIfam" id="TIGR00952">
    <property type="entry name" value="S15_bact"/>
    <property type="match status" value="1"/>
</dbReference>
<dbReference type="PANTHER" id="PTHR23321">
    <property type="entry name" value="RIBOSOMAL PROTEIN S15, BACTERIAL AND ORGANELLAR"/>
    <property type="match status" value="1"/>
</dbReference>
<dbReference type="PANTHER" id="PTHR23321:SF26">
    <property type="entry name" value="SMALL RIBOSOMAL SUBUNIT PROTEIN US15M"/>
    <property type="match status" value="1"/>
</dbReference>
<dbReference type="Pfam" id="PF00312">
    <property type="entry name" value="Ribosomal_S15"/>
    <property type="match status" value="1"/>
</dbReference>
<dbReference type="SMART" id="SM01387">
    <property type="entry name" value="Ribosomal_S15"/>
    <property type="match status" value="1"/>
</dbReference>
<dbReference type="SUPFAM" id="SSF47060">
    <property type="entry name" value="S15/NS1 RNA-binding domain"/>
    <property type="match status" value="1"/>
</dbReference>
<gene>
    <name evidence="1" type="primary">rpsO</name>
    <name type="ordered locus">WRi_008400</name>
</gene>
<protein>
    <recommendedName>
        <fullName evidence="1">Small ribosomal subunit protein uS15</fullName>
    </recommendedName>
    <alternativeName>
        <fullName evidence="2">30S ribosomal protein S15</fullName>
    </alternativeName>
</protein>
<accession>C0R3T5</accession>
<keyword id="KW-0687">Ribonucleoprotein</keyword>
<keyword id="KW-0689">Ribosomal protein</keyword>
<keyword id="KW-0694">RNA-binding</keyword>
<keyword id="KW-0699">rRNA-binding</keyword>
<evidence type="ECO:0000255" key="1">
    <source>
        <dbReference type="HAMAP-Rule" id="MF_01343"/>
    </source>
</evidence>
<evidence type="ECO:0000305" key="2"/>